<keyword id="KW-0007">Acetylation</keyword>
<keyword id="KW-1017">Isopeptide bond</keyword>
<keyword id="KW-0914">Notch signaling pathway</keyword>
<keyword id="KW-0539">Nucleus</keyword>
<keyword id="KW-0597">Phosphoprotein</keyword>
<keyword id="KW-1185">Reference proteome</keyword>
<keyword id="KW-0678">Repressor</keyword>
<keyword id="KW-0804">Transcription</keyword>
<keyword id="KW-0805">Transcription regulation</keyword>
<keyword id="KW-0832">Ubl conjugation</keyword>
<gene>
    <name type="primary">Nkap</name>
</gene>
<name>NKAP_MOUSE</name>
<dbReference type="EMBL" id="AY388959">
    <property type="protein sequence ID" value="AAQ90403.1"/>
    <property type="molecule type" value="mRNA"/>
</dbReference>
<dbReference type="EMBL" id="AK011492">
    <property type="protein sequence ID" value="BAB27654.1"/>
    <property type="molecule type" value="mRNA"/>
</dbReference>
<dbReference type="EMBL" id="AK012826">
    <property type="protein sequence ID" value="BAB28497.3"/>
    <property type="molecule type" value="mRNA"/>
</dbReference>
<dbReference type="EMBL" id="AK038344">
    <property type="protein sequence ID" value="BAC29972.1"/>
    <property type="molecule type" value="mRNA"/>
</dbReference>
<dbReference type="EMBL" id="AK089943">
    <property type="protein sequence ID" value="BAC41010.1"/>
    <property type="molecule type" value="mRNA"/>
</dbReference>
<dbReference type="EMBL" id="BC026774">
    <property type="protein sequence ID" value="AAH26774.1"/>
    <property type="molecule type" value="mRNA"/>
</dbReference>
<dbReference type="CCDS" id="CCDS30069.1"/>
<dbReference type="RefSeq" id="NP_080213.3">
    <property type="nucleotide sequence ID" value="NM_025937.4"/>
</dbReference>
<dbReference type="SMR" id="Q9D0F4"/>
<dbReference type="BioGRID" id="211903">
    <property type="interactions" value="2"/>
</dbReference>
<dbReference type="FunCoup" id="Q9D0F4">
    <property type="interactions" value="3982"/>
</dbReference>
<dbReference type="IntAct" id="Q9D0F4">
    <property type="interactions" value="2"/>
</dbReference>
<dbReference type="MINT" id="Q9D0F4"/>
<dbReference type="STRING" id="10090.ENSMUSP00000016553"/>
<dbReference type="iPTMnet" id="Q9D0F4"/>
<dbReference type="PhosphoSitePlus" id="Q9D0F4"/>
<dbReference type="jPOST" id="Q9D0F4"/>
<dbReference type="PaxDb" id="10090-ENSMUSP00000016553"/>
<dbReference type="PeptideAtlas" id="Q9D0F4"/>
<dbReference type="ProteomicsDB" id="253078"/>
<dbReference type="Pumba" id="Q9D0F4"/>
<dbReference type="Antibodypedia" id="364">
    <property type="antibodies" value="132 antibodies from 25 providers"/>
</dbReference>
<dbReference type="Ensembl" id="ENSMUST00000016553.5">
    <property type="protein sequence ID" value="ENSMUSP00000016553.5"/>
    <property type="gene ID" value="ENSMUSG00000016409.5"/>
</dbReference>
<dbReference type="GeneID" id="67050"/>
<dbReference type="KEGG" id="mmu:67050"/>
<dbReference type="UCSC" id="uc009syg.2">
    <property type="organism name" value="mouse"/>
</dbReference>
<dbReference type="AGR" id="MGI:1914300"/>
<dbReference type="CTD" id="79576"/>
<dbReference type="MGI" id="MGI:1914300">
    <property type="gene designation" value="Nkap"/>
</dbReference>
<dbReference type="VEuPathDB" id="HostDB:ENSMUSG00000016409"/>
<dbReference type="eggNOG" id="KOG2812">
    <property type="taxonomic scope" value="Eukaryota"/>
</dbReference>
<dbReference type="GeneTree" id="ENSGT00940000160787"/>
<dbReference type="HOGENOM" id="CLU_032439_1_0_1"/>
<dbReference type="InParanoid" id="Q9D0F4"/>
<dbReference type="OMA" id="HGKQWGD"/>
<dbReference type="OrthoDB" id="273141at2759"/>
<dbReference type="PhylomeDB" id="Q9D0F4"/>
<dbReference type="TreeFam" id="TF315333"/>
<dbReference type="Reactome" id="R-MMU-72163">
    <property type="pathway name" value="mRNA Splicing - Major Pathway"/>
</dbReference>
<dbReference type="BioGRID-ORCS" id="67050">
    <property type="hits" value="18 hits in 77 CRISPR screens"/>
</dbReference>
<dbReference type="ChiTaRS" id="Nkap">
    <property type="organism name" value="mouse"/>
</dbReference>
<dbReference type="PRO" id="PR:Q9D0F4"/>
<dbReference type="Proteomes" id="UP000000589">
    <property type="component" value="Chromosome X"/>
</dbReference>
<dbReference type="RNAct" id="Q9D0F4">
    <property type="molecule type" value="protein"/>
</dbReference>
<dbReference type="Bgee" id="ENSMUSG00000016409">
    <property type="expression patterns" value="Expressed in aortic valve and 226 other cell types or tissues"/>
</dbReference>
<dbReference type="GO" id="GO:0005829">
    <property type="term" value="C:cytosol"/>
    <property type="evidence" value="ECO:0007669"/>
    <property type="project" value="Ensembl"/>
</dbReference>
<dbReference type="GO" id="GO:0005654">
    <property type="term" value="C:nucleoplasm"/>
    <property type="evidence" value="ECO:0007669"/>
    <property type="project" value="Ensembl"/>
</dbReference>
<dbReference type="GO" id="GO:0003682">
    <property type="term" value="F:chromatin binding"/>
    <property type="evidence" value="ECO:0000250"/>
    <property type="project" value="UniProtKB"/>
</dbReference>
<dbReference type="GO" id="GO:0031490">
    <property type="term" value="F:chromatin DNA binding"/>
    <property type="evidence" value="ECO:0000314"/>
    <property type="project" value="MGI"/>
</dbReference>
<dbReference type="GO" id="GO:0030851">
    <property type="term" value="P:granulocyte differentiation"/>
    <property type="evidence" value="ECO:0000315"/>
    <property type="project" value="MGI"/>
</dbReference>
<dbReference type="GO" id="GO:0071425">
    <property type="term" value="P:hematopoietic stem cell proliferation"/>
    <property type="evidence" value="ECO:0000315"/>
    <property type="project" value="MGI"/>
</dbReference>
<dbReference type="GO" id="GO:0030097">
    <property type="term" value="P:hemopoiesis"/>
    <property type="evidence" value="ECO:0000315"/>
    <property type="project" value="MGI"/>
</dbReference>
<dbReference type="GO" id="GO:0045892">
    <property type="term" value="P:negative regulation of DNA-templated transcription"/>
    <property type="evidence" value="ECO:0000250"/>
    <property type="project" value="UniProtKB"/>
</dbReference>
<dbReference type="GO" id="GO:0000122">
    <property type="term" value="P:negative regulation of transcription by RNA polymerase II"/>
    <property type="evidence" value="ECO:0000315"/>
    <property type="project" value="MGI"/>
</dbReference>
<dbReference type="GO" id="GO:0007219">
    <property type="term" value="P:Notch signaling pathway"/>
    <property type="evidence" value="ECO:0007669"/>
    <property type="project" value="UniProtKB-KW"/>
</dbReference>
<dbReference type="GO" id="GO:0046638">
    <property type="term" value="P:positive regulation of alpha-beta T cell differentiation"/>
    <property type="evidence" value="ECO:0000250"/>
    <property type="project" value="UniProtKB"/>
</dbReference>
<dbReference type="GO" id="GO:0035019">
    <property type="term" value="P:somatic stem cell population maintenance"/>
    <property type="evidence" value="ECO:0000315"/>
    <property type="project" value="MGI"/>
</dbReference>
<dbReference type="GO" id="GO:0033077">
    <property type="term" value="P:T cell differentiation in thymus"/>
    <property type="evidence" value="ECO:0000315"/>
    <property type="project" value="MGI"/>
</dbReference>
<dbReference type="InterPro" id="IPR040466">
    <property type="entry name" value="NKAP"/>
</dbReference>
<dbReference type="InterPro" id="IPR009269">
    <property type="entry name" value="NKAP_C"/>
</dbReference>
<dbReference type="PANTHER" id="PTHR13087">
    <property type="entry name" value="NF-KAPPA B ACTIVATING PROTEIN"/>
    <property type="match status" value="1"/>
</dbReference>
<dbReference type="PANTHER" id="PTHR13087:SF2">
    <property type="entry name" value="NF-KAPPA-B-ACTIVATING PROTEIN"/>
    <property type="match status" value="1"/>
</dbReference>
<dbReference type="Pfam" id="PF15692">
    <property type="entry name" value="NKAP"/>
    <property type="match status" value="1"/>
</dbReference>
<dbReference type="Pfam" id="PF06047">
    <property type="entry name" value="Nkap_C"/>
    <property type="match status" value="1"/>
</dbReference>
<accession>Q9D0F4</accession>
<accession>Q8BTK6</accession>
<accession>Q8BYT5</accession>
<accession>Q8R324</accession>
<accession>Q9CSH4</accession>
<comment type="function">
    <text evidence="2">Acts as a transcriptional repressor. Plays a role as a transcriptional corepressor of the Notch-mediated signaling required for T-cell development. Also involved in the TNF and IL-1 induced NF-kappa-B activation. Associates with chromatin at the Notch-regulated SKP2 promoter (By similarity).</text>
</comment>
<comment type="subunit">
    <text evidence="1">Component of the Notch corepressor complex. Interacts with CIR1 and HDAC3 (By similarity).</text>
</comment>
<comment type="subcellular location">
    <subcellularLocation>
        <location evidence="1">Nucleus</location>
    </subcellularLocation>
</comment>
<comment type="similarity">
    <text evidence="4">Belongs to the NKAP family.</text>
</comment>
<evidence type="ECO:0000250" key="1"/>
<evidence type="ECO:0000250" key="2">
    <source>
        <dbReference type="UniProtKB" id="Q8N5F7"/>
    </source>
</evidence>
<evidence type="ECO:0000256" key="3">
    <source>
        <dbReference type="SAM" id="MobiDB-lite"/>
    </source>
</evidence>
<evidence type="ECO:0000305" key="4"/>
<proteinExistence type="evidence at transcript level"/>
<protein>
    <recommendedName>
        <fullName>NF-kappa-B-activating protein</fullName>
    </recommendedName>
</protein>
<organism>
    <name type="scientific">Mus musculus</name>
    <name type="common">Mouse</name>
    <dbReference type="NCBI Taxonomy" id="10090"/>
    <lineage>
        <taxon>Eukaryota</taxon>
        <taxon>Metazoa</taxon>
        <taxon>Chordata</taxon>
        <taxon>Craniata</taxon>
        <taxon>Vertebrata</taxon>
        <taxon>Euteleostomi</taxon>
        <taxon>Mammalia</taxon>
        <taxon>Eutheria</taxon>
        <taxon>Euarchontoglires</taxon>
        <taxon>Glires</taxon>
        <taxon>Rodentia</taxon>
        <taxon>Myomorpha</taxon>
        <taxon>Muroidea</taxon>
        <taxon>Muridae</taxon>
        <taxon>Murinae</taxon>
        <taxon>Mus</taxon>
        <taxon>Mus</taxon>
    </lineage>
</organism>
<feature type="chain" id="PRO_0000259646" description="NF-kappa-B-activating protein">
    <location>
        <begin position="1"/>
        <end position="415"/>
    </location>
</feature>
<feature type="region of interest" description="Disordered" evidence="3">
    <location>
        <begin position="1"/>
        <end position="311"/>
    </location>
</feature>
<feature type="region of interest" description="Necessary for interaction with CIR1" evidence="1">
    <location>
        <begin position="177"/>
        <end position="272"/>
    </location>
</feature>
<feature type="region of interest" description="Necessary for interaction with HDAC3 and transcriptional repression" evidence="1">
    <location>
        <begin position="273"/>
        <end position="415"/>
    </location>
</feature>
<feature type="compositionally biased region" description="Low complexity" evidence="3">
    <location>
        <begin position="23"/>
        <end position="32"/>
    </location>
</feature>
<feature type="compositionally biased region" description="Basic residues" evidence="3">
    <location>
        <begin position="33"/>
        <end position="44"/>
    </location>
</feature>
<feature type="compositionally biased region" description="Low complexity" evidence="3">
    <location>
        <begin position="54"/>
        <end position="71"/>
    </location>
</feature>
<feature type="compositionally biased region" description="Low complexity" evidence="3">
    <location>
        <begin position="84"/>
        <end position="108"/>
    </location>
</feature>
<feature type="compositionally biased region" description="Basic and acidic residues" evidence="3">
    <location>
        <begin position="116"/>
        <end position="136"/>
    </location>
</feature>
<feature type="compositionally biased region" description="Basic and acidic residues" evidence="3">
    <location>
        <begin position="156"/>
        <end position="168"/>
    </location>
</feature>
<feature type="compositionally biased region" description="Basic residues" evidence="3">
    <location>
        <begin position="181"/>
        <end position="208"/>
    </location>
</feature>
<feature type="compositionally biased region" description="Acidic residues" evidence="3">
    <location>
        <begin position="212"/>
        <end position="225"/>
    </location>
</feature>
<feature type="compositionally biased region" description="Basic residues" evidence="3">
    <location>
        <begin position="230"/>
        <end position="258"/>
    </location>
</feature>
<feature type="compositionally biased region" description="Basic and acidic residues" evidence="3">
    <location>
        <begin position="259"/>
        <end position="270"/>
    </location>
</feature>
<feature type="compositionally biased region" description="Basic and acidic residues" evidence="3">
    <location>
        <begin position="277"/>
        <end position="286"/>
    </location>
</feature>
<feature type="modified residue" description="Phosphoserine" evidence="2">
    <location>
        <position position="7"/>
    </location>
</feature>
<feature type="modified residue" description="Phosphoserine" evidence="2">
    <location>
        <position position="9"/>
    </location>
</feature>
<feature type="modified residue" description="Phosphoserine" evidence="2">
    <location>
        <position position="62"/>
    </location>
</feature>
<feature type="modified residue" description="N6-acetyllysine" evidence="2">
    <location>
        <position position="110"/>
    </location>
</feature>
<feature type="modified residue" description="Phosphoserine" evidence="2">
    <location>
        <position position="147"/>
    </location>
</feature>
<feature type="modified residue" description="Phosphoserine" evidence="2">
    <location>
        <position position="155"/>
    </location>
</feature>
<feature type="modified residue" description="Phosphothreonine" evidence="2">
    <location>
        <position position="159"/>
    </location>
</feature>
<feature type="cross-link" description="Glycyl lysine isopeptide (Lys-Gly) (interchain with G-Cter in SUMO2)" evidence="2">
    <location>
        <position position="283"/>
    </location>
</feature>
<feature type="cross-link" description="Glycyl lysine isopeptide (Lys-Gly) (interchain with G-Cter in SUMO2)" evidence="2">
    <location>
        <position position="305"/>
    </location>
</feature>
<feature type="sequence conflict" description="In Ref. 2; BAC41010." evidence="4" ref="2">
    <original>K</original>
    <variation>E</variation>
    <location>
        <position position="185"/>
    </location>
</feature>
<feature type="sequence conflict" description="In Ref. 3; AAH26774." evidence="4" ref="3">
    <original>D</original>
    <variation>E</variation>
    <location>
        <position position="191"/>
    </location>
</feature>
<feature type="sequence conflict" description="In Ref. 2; BAC41010." evidence="4" ref="2">
    <original>KK</original>
    <variation>QE</variation>
    <location>
        <begin position="194"/>
        <end position="195"/>
    </location>
</feature>
<feature type="sequence conflict" description="In Ref. 2; BAC29972." evidence="4" ref="2">
    <original>P</original>
    <variation>A</variation>
    <location>
        <position position="293"/>
    </location>
</feature>
<sequence length="415" mass="47227">MAPVSGSRSPEREASGAKRRSPSRSPKSIKSSRSPRCRRSRSRSCSRFGDRNGLSHSLSGFSQSSRNQSYRSRSRSRSRERPSAQRSAPFASASSSAYYGGYSRPYGGDKPWPSLLDKEREESLRQKRLSERERIGELGAPEVWGLSPKNPEPDSDEHTPVEDEEPKKSTTSASSSEDDKKKKRKSSHSKDRAKKKRKKKSSKRKHKKYSEDSDSDSESDTDSSDEDSKRRAKKAKKKDKKKKRRGKKYKKKKSKKNRKESSDSSSKESQEEFLENPWKDRSKAEEPSDLIGPEAPKTLASQDDKPLNYGHALLPGEGAAMAEYVKAGKRIPRRGEIGLTSEEIASFECSGYVMSGSRHRRMEAVRLRKENQIYSADEKRALASFNQEERRKRENKILASFREMVYRKTKGKDDK</sequence>
<reference key="1">
    <citation type="journal article" date="2003" name="Biochem. Biophys. Res. Commun.">
        <title>Identification of a nuclear protein that promotes NF-kappaB activation.</title>
        <authorList>
            <person name="Chen D."/>
            <person name="Li Z."/>
            <person name="Yang Q."/>
            <person name="Zhang J."/>
            <person name="Zhai Z."/>
            <person name="Shu H.-B."/>
        </authorList>
    </citation>
    <scope>NUCLEOTIDE SEQUENCE [MRNA]</scope>
</reference>
<reference key="2">
    <citation type="journal article" date="2005" name="Science">
        <title>The transcriptional landscape of the mammalian genome.</title>
        <authorList>
            <person name="Carninci P."/>
            <person name="Kasukawa T."/>
            <person name="Katayama S."/>
            <person name="Gough J."/>
            <person name="Frith M.C."/>
            <person name="Maeda N."/>
            <person name="Oyama R."/>
            <person name="Ravasi T."/>
            <person name="Lenhard B."/>
            <person name="Wells C."/>
            <person name="Kodzius R."/>
            <person name="Shimokawa K."/>
            <person name="Bajic V.B."/>
            <person name="Brenner S.E."/>
            <person name="Batalov S."/>
            <person name="Forrest A.R."/>
            <person name="Zavolan M."/>
            <person name="Davis M.J."/>
            <person name="Wilming L.G."/>
            <person name="Aidinis V."/>
            <person name="Allen J.E."/>
            <person name="Ambesi-Impiombato A."/>
            <person name="Apweiler R."/>
            <person name="Aturaliya R.N."/>
            <person name="Bailey T.L."/>
            <person name="Bansal M."/>
            <person name="Baxter L."/>
            <person name="Beisel K.W."/>
            <person name="Bersano T."/>
            <person name="Bono H."/>
            <person name="Chalk A.M."/>
            <person name="Chiu K.P."/>
            <person name="Choudhary V."/>
            <person name="Christoffels A."/>
            <person name="Clutterbuck D.R."/>
            <person name="Crowe M.L."/>
            <person name="Dalla E."/>
            <person name="Dalrymple B.P."/>
            <person name="de Bono B."/>
            <person name="Della Gatta G."/>
            <person name="di Bernardo D."/>
            <person name="Down T."/>
            <person name="Engstrom P."/>
            <person name="Fagiolini M."/>
            <person name="Faulkner G."/>
            <person name="Fletcher C.F."/>
            <person name="Fukushima T."/>
            <person name="Furuno M."/>
            <person name="Futaki S."/>
            <person name="Gariboldi M."/>
            <person name="Georgii-Hemming P."/>
            <person name="Gingeras T.R."/>
            <person name="Gojobori T."/>
            <person name="Green R.E."/>
            <person name="Gustincich S."/>
            <person name="Harbers M."/>
            <person name="Hayashi Y."/>
            <person name="Hensch T.K."/>
            <person name="Hirokawa N."/>
            <person name="Hill D."/>
            <person name="Huminiecki L."/>
            <person name="Iacono M."/>
            <person name="Ikeo K."/>
            <person name="Iwama A."/>
            <person name="Ishikawa T."/>
            <person name="Jakt M."/>
            <person name="Kanapin A."/>
            <person name="Katoh M."/>
            <person name="Kawasawa Y."/>
            <person name="Kelso J."/>
            <person name="Kitamura H."/>
            <person name="Kitano H."/>
            <person name="Kollias G."/>
            <person name="Krishnan S.P."/>
            <person name="Kruger A."/>
            <person name="Kummerfeld S.K."/>
            <person name="Kurochkin I.V."/>
            <person name="Lareau L.F."/>
            <person name="Lazarevic D."/>
            <person name="Lipovich L."/>
            <person name="Liu J."/>
            <person name="Liuni S."/>
            <person name="McWilliam S."/>
            <person name="Madan Babu M."/>
            <person name="Madera M."/>
            <person name="Marchionni L."/>
            <person name="Matsuda H."/>
            <person name="Matsuzawa S."/>
            <person name="Miki H."/>
            <person name="Mignone F."/>
            <person name="Miyake S."/>
            <person name="Morris K."/>
            <person name="Mottagui-Tabar S."/>
            <person name="Mulder N."/>
            <person name="Nakano N."/>
            <person name="Nakauchi H."/>
            <person name="Ng P."/>
            <person name="Nilsson R."/>
            <person name="Nishiguchi S."/>
            <person name="Nishikawa S."/>
            <person name="Nori F."/>
            <person name="Ohara O."/>
            <person name="Okazaki Y."/>
            <person name="Orlando V."/>
            <person name="Pang K.C."/>
            <person name="Pavan W.J."/>
            <person name="Pavesi G."/>
            <person name="Pesole G."/>
            <person name="Petrovsky N."/>
            <person name="Piazza S."/>
            <person name="Reed J."/>
            <person name="Reid J.F."/>
            <person name="Ring B.Z."/>
            <person name="Ringwald M."/>
            <person name="Rost B."/>
            <person name="Ruan Y."/>
            <person name="Salzberg S.L."/>
            <person name="Sandelin A."/>
            <person name="Schneider C."/>
            <person name="Schoenbach C."/>
            <person name="Sekiguchi K."/>
            <person name="Semple C.A."/>
            <person name="Seno S."/>
            <person name="Sessa L."/>
            <person name="Sheng Y."/>
            <person name="Shibata Y."/>
            <person name="Shimada H."/>
            <person name="Shimada K."/>
            <person name="Silva D."/>
            <person name="Sinclair B."/>
            <person name="Sperling S."/>
            <person name="Stupka E."/>
            <person name="Sugiura K."/>
            <person name="Sultana R."/>
            <person name="Takenaka Y."/>
            <person name="Taki K."/>
            <person name="Tammoja K."/>
            <person name="Tan S.L."/>
            <person name="Tang S."/>
            <person name="Taylor M.S."/>
            <person name="Tegner J."/>
            <person name="Teichmann S.A."/>
            <person name="Ueda H.R."/>
            <person name="van Nimwegen E."/>
            <person name="Verardo R."/>
            <person name="Wei C.L."/>
            <person name="Yagi K."/>
            <person name="Yamanishi H."/>
            <person name="Zabarovsky E."/>
            <person name="Zhu S."/>
            <person name="Zimmer A."/>
            <person name="Hide W."/>
            <person name="Bult C."/>
            <person name="Grimmond S.M."/>
            <person name="Teasdale R.D."/>
            <person name="Liu E.T."/>
            <person name="Brusic V."/>
            <person name="Quackenbush J."/>
            <person name="Wahlestedt C."/>
            <person name="Mattick J.S."/>
            <person name="Hume D.A."/>
            <person name="Kai C."/>
            <person name="Sasaki D."/>
            <person name="Tomaru Y."/>
            <person name="Fukuda S."/>
            <person name="Kanamori-Katayama M."/>
            <person name="Suzuki M."/>
            <person name="Aoki J."/>
            <person name="Arakawa T."/>
            <person name="Iida J."/>
            <person name="Imamura K."/>
            <person name="Itoh M."/>
            <person name="Kato T."/>
            <person name="Kawaji H."/>
            <person name="Kawagashira N."/>
            <person name="Kawashima T."/>
            <person name="Kojima M."/>
            <person name="Kondo S."/>
            <person name="Konno H."/>
            <person name="Nakano K."/>
            <person name="Ninomiya N."/>
            <person name="Nishio T."/>
            <person name="Okada M."/>
            <person name="Plessy C."/>
            <person name="Shibata K."/>
            <person name="Shiraki T."/>
            <person name="Suzuki S."/>
            <person name="Tagami M."/>
            <person name="Waki K."/>
            <person name="Watahiki A."/>
            <person name="Okamura-Oho Y."/>
            <person name="Suzuki H."/>
            <person name="Kawai J."/>
            <person name="Hayashizaki Y."/>
        </authorList>
    </citation>
    <scope>NUCLEOTIDE SEQUENCE [LARGE SCALE MRNA]</scope>
    <source>
        <strain>C57BL/6J</strain>
        <tissue>Thymus</tissue>
    </source>
</reference>
<reference key="3">
    <citation type="journal article" date="2004" name="Genome Res.">
        <title>The status, quality, and expansion of the NIH full-length cDNA project: the Mammalian Gene Collection (MGC).</title>
        <authorList>
            <consortium name="The MGC Project Team"/>
        </authorList>
    </citation>
    <scope>NUCLEOTIDE SEQUENCE [LARGE SCALE MRNA]</scope>
    <source>
        <strain>Czech II</strain>
        <tissue>Mammary gland</tissue>
    </source>
</reference>